<gene>
    <name type="primary">virB10</name>
    <name type="ordered locus">BRA0060</name>
    <name type="ordered locus">BS1330_II0060</name>
</gene>
<sequence>MTQENIPVQPGTLDGERGLPTVNENGSGRTRKVLLFLFVVGFIVVLLLLLVFHMRGNAENNHHSDKTMVQTSTVPMRTFKLPPPPPPPPPAPPEPPAPPPAPAMPIAEPAAAALSLPPLPDDTPAKDDVLDKSASALMVVTKSSGDTNAQTAGDTVVQTTNARIQALLDSQKNTKQDAGSLGTLLHGTQTDARMASLLRNRDFLLAKGSIINCALQTRLDSTVPGMAACVVTRNMYSDNGKVLLIERGSTISGEYDANVKQGMARIYVLWTRVKTPNGVVIDLDSPGADPLGGAGLPGYIDSHFWKRFGGALMLSTIETLGRYATQKVGGGGSNQINLNTGGGESTSNLASTALKDTINIPPTLYKNQGEEIGIYIARDLDFSSVYDVKPK</sequence>
<name>VIRBA_BRUSU</name>
<keyword id="KW-1003">Cell membrane</keyword>
<keyword id="KW-0472">Membrane</keyword>
<keyword id="KW-0812">Transmembrane</keyword>
<keyword id="KW-1133">Transmembrane helix</keyword>
<keyword id="KW-0843">Virulence</keyword>
<proteinExistence type="evidence at protein level"/>
<feature type="chain" id="PRO_0000291388" description="Type IV secretion system protein virB10">
    <location>
        <begin position="1"/>
        <end position="391"/>
    </location>
</feature>
<feature type="transmembrane region" description="Helical" evidence="1">
    <location>
        <begin position="33"/>
        <end position="53"/>
    </location>
</feature>
<feature type="region of interest" description="Disordered" evidence="2">
    <location>
        <begin position="1"/>
        <end position="26"/>
    </location>
</feature>
<feature type="region of interest" description="Disordered" evidence="2">
    <location>
        <begin position="76"/>
        <end position="105"/>
    </location>
</feature>
<feature type="compositionally biased region" description="Pro residues" evidence="2">
    <location>
        <begin position="81"/>
        <end position="103"/>
    </location>
</feature>
<feature type="sequence conflict" description="In Ref. 1; AAD56620." evidence="3" ref="1">
    <original>P</original>
    <variation>A</variation>
    <location>
        <position position="83"/>
    </location>
</feature>
<feature type="sequence conflict" description="In Ref. 1; AAD56620." evidence="3" ref="1">
    <original>D</original>
    <variation>E</variation>
    <location>
        <position position="238"/>
    </location>
</feature>
<feature type="sequence conflict" description="In Ref. 1; AAD56620." evidence="3" ref="1">
    <original>R</original>
    <variation>H</variation>
    <location>
        <position position="272"/>
    </location>
</feature>
<feature type="sequence conflict" description="In Ref. 1; AAD56620." evidence="3" ref="1">
    <original>K</original>
    <variation>Q</variation>
    <location>
        <position position="389"/>
    </location>
</feature>
<comment type="function">
    <text>The VirB system could be required for the establishment of the replication niche in the host.</text>
</comment>
<comment type="interaction">
    <interactant intactId="EBI-7022388">
        <id>Q9RPX5</id>
    </interactant>
    <interactant intactId="EBI-11178687">
        <id>Q9RPX9</id>
        <label>virB6</label>
    </interactant>
    <organismsDiffer>false</organismsDiffer>
    <experiments>3</experiments>
</comment>
<comment type="interaction">
    <interactant intactId="EBI-7022388">
        <id>Q9RPX5</id>
    </interactant>
    <interactant intactId="EBI-6407073">
        <id>Q7CEG3</id>
        <label>virB8</label>
    </interactant>
    <organismsDiffer>false</organismsDiffer>
    <experiments>5</experiments>
</comment>
<comment type="subcellular location">
    <subcellularLocation>
        <location evidence="3">Cell membrane</location>
        <topology evidence="3">Single-pass membrane protein</topology>
    </subcellularLocation>
</comment>
<comment type="induction">
    <text>Specifically induced within macrophages by phagosome acidification. Induced at 37 degrees Celsius in minimal medium, suggesting that nutritional stress is a regulating signal.</text>
</comment>
<comment type="miscellaneous">
    <text>Transcription of the operon is maximal in early exponential phase.</text>
</comment>
<comment type="similarity">
    <text evidence="3">Belongs to the TrbI/VirB10 family.</text>
</comment>
<dbReference type="EMBL" id="AF141604">
    <property type="protein sequence ID" value="AAD56620.1"/>
    <property type="molecule type" value="Genomic_DNA"/>
</dbReference>
<dbReference type="EMBL" id="AE014292">
    <property type="protein sequence ID" value="AAN33272.1"/>
    <property type="molecule type" value="Genomic_DNA"/>
</dbReference>
<dbReference type="EMBL" id="CP002998">
    <property type="protein sequence ID" value="AEM19552.1"/>
    <property type="molecule type" value="Genomic_DNA"/>
</dbReference>
<dbReference type="RefSeq" id="WP_004689962.1">
    <property type="nucleotide sequence ID" value="NZ_KN046805.1"/>
</dbReference>
<dbReference type="SMR" id="Q9RPX5"/>
<dbReference type="DIP" id="DIP-61161N"/>
<dbReference type="IntAct" id="Q9RPX5">
    <property type="interactions" value="2"/>
</dbReference>
<dbReference type="MINT" id="Q9RPX5"/>
<dbReference type="GeneID" id="55591797"/>
<dbReference type="KEGG" id="bms:BRA0060"/>
<dbReference type="KEGG" id="bsi:BS1330_II0060"/>
<dbReference type="PATRIC" id="fig|204722.22.peg.2852"/>
<dbReference type="HOGENOM" id="CLU_041899_6_0_5"/>
<dbReference type="PhylomeDB" id="Q9RPX5"/>
<dbReference type="PRO" id="PR:Q9RPX5"/>
<dbReference type="Proteomes" id="UP000007104">
    <property type="component" value="Chromosome II"/>
</dbReference>
<dbReference type="GO" id="GO:0005886">
    <property type="term" value="C:plasma membrane"/>
    <property type="evidence" value="ECO:0007669"/>
    <property type="project" value="UniProtKB-SubCell"/>
</dbReference>
<dbReference type="CDD" id="cd16429">
    <property type="entry name" value="VirB10"/>
    <property type="match status" value="1"/>
</dbReference>
<dbReference type="Gene3D" id="2.40.128.260">
    <property type="entry name" value="Type IV secretion system, VirB10/TraB/TrbI"/>
    <property type="match status" value="2"/>
</dbReference>
<dbReference type="InterPro" id="IPR047695">
    <property type="entry name" value="T4SS_VirB10/PtlG"/>
</dbReference>
<dbReference type="InterPro" id="IPR005498">
    <property type="entry name" value="T4SS_VirB10/TraB/TrbI"/>
</dbReference>
<dbReference type="InterPro" id="IPR042217">
    <property type="entry name" value="T4SS_VirB10/TrbI"/>
</dbReference>
<dbReference type="NCBIfam" id="NF038091">
    <property type="entry name" value="T4SS_VirB10"/>
    <property type="match status" value="1"/>
</dbReference>
<dbReference type="Pfam" id="PF03743">
    <property type="entry name" value="TrbI"/>
    <property type="match status" value="1"/>
</dbReference>
<protein>
    <recommendedName>
        <fullName>Type IV secretion system protein virB10</fullName>
    </recommendedName>
</protein>
<accession>Q9RPX5</accession>
<accession>G0KEQ8</accession>
<accession>Q8FXK6</accession>
<reference key="1">
    <citation type="journal article" date="1999" name="Mol. Microbiol.">
        <title>A homologue of the Agrobacterium tumefaciens VirB and Bordetella pertussis Ptl type IV secretion systems is essential for intracellular survival of Brucella suis.</title>
        <authorList>
            <person name="O'Callaghan D."/>
            <person name="Cazevieille C."/>
            <person name="Allardet-Servent A."/>
            <person name="Boschiroli M.L."/>
            <person name="Bourg G."/>
            <person name="Foulongne V."/>
            <person name="Frutos P."/>
            <person name="Kulakov Y."/>
            <person name="Ramuz M."/>
        </authorList>
    </citation>
    <scope>NUCLEOTIDE SEQUENCE [GENOMIC DNA]</scope>
    <source>
        <strain>1330</strain>
    </source>
</reference>
<reference key="2">
    <citation type="journal article" date="2002" name="Proc. Natl. Acad. Sci. U.S.A.">
        <title>The Brucella suis virB operon is induced intracellularly in macrophages.</title>
        <authorList>
            <person name="Boschiroli M.L."/>
            <person name="Ouahrani-Bettache S."/>
            <person name="Foulongne V."/>
            <person name="Michaux-Charachon S."/>
            <person name="Bourg G."/>
            <person name="Allardet-Servent A."/>
            <person name="Cazevieille C."/>
            <person name="Liautard J.P."/>
            <person name="Ramuz M."/>
            <person name="O'Callaghan D."/>
        </authorList>
    </citation>
    <scope>NUCLEOTIDE SEQUENCE [GENOMIC DNA]</scope>
    <scope>EXPRESSION CONDITIONS</scope>
    <source>
        <strain>1330</strain>
    </source>
</reference>
<reference key="3">
    <citation type="journal article" date="2002" name="Proc. Natl. Acad. Sci. U.S.A.">
        <title>The Brucella suis genome reveals fundamental similarities between animal and plant pathogens and symbionts.</title>
        <authorList>
            <person name="Paulsen I.T."/>
            <person name="Seshadri R."/>
            <person name="Nelson K.E."/>
            <person name="Eisen J.A."/>
            <person name="Heidelberg J.F."/>
            <person name="Read T.D."/>
            <person name="Dodson R.J."/>
            <person name="Umayam L.A."/>
            <person name="Brinkac L.M."/>
            <person name="Beanan M.J."/>
            <person name="Daugherty S.C."/>
            <person name="DeBoy R.T."/>
            <person name="Durkin A.S."/>
            <person name="Kolonay J.F."/>
            <person name="Madupu R."/>
            <person name="Nelson W.C."/>
            <person name="Ayodeji B."/>
            <person name="Kraul M."/>
            <person name="Shetty J."/>
            <person name="Malek J.A."/>
            <person name="Van Aken S.E."/>
            <person name="Riedmuller S."/>
            <person name="Tettelin H."/>
            <person name="Gill S.R."/>
            <person name="White O."/>
            <person name="Salzberg S.L."/>
            <person name="Hoover D.L."/>
            <person name="Lindler L.E."/>
            <person name="Halling S.M."/>
            <person name="Boyle S.M."/>
            <person name="Fraser C.M."/>
        </authorList>
    </citation>
    <scope>NUCLEOTIDE SEQUENCE [LARGE SCALE GENOMIC DNA]</scope>
    <source>
        <strain>1330</strain>
    </source>
</reference>
<reference key="4">
    <citation type="journal article" date="2011" name="J. Bacteriol.">
        <title>Revised genome sequence of Brucella suis 1330.</title>
        <authorList>
            <person name="Tae H."/>
            <person name="Shallom S."/>
            <person name="Settlage R."/>
            <person name="Preston D."/>
            <person name="Adams L.G."/>
            <person name="Garner H.R."/>
        </authorList>
    </citation>
    <scope>NUCLEOTIDE SEQUENCE [LARGE SCALE GENOMIC DNA]</scope>
    <source>
        <strain>1330</strain>
    </source>
</reference>
<organism>
    <name type="scientific">Brucella suis biovar 1 (strain 1330)</name>
    <dbReference type="NCBI Taxonomy" id="204722"/>
    <lineage>
        <taxon>Bacteria</taxon>
        <taxon>Pseudomonadati</taxon>
        <taxon>Pseudomonadota</taxon>
        <taxon>Alphaproteobacteria</taxon>
        <taxon>Hyphomicrobiales</taxon>
        <taxon>Brucellaceae</taxon>
        <taxon>Brucella/Ochrobactrum group</taxon>
        <taxon>Brucella</taxon>
    </lineage>
</organism>
<evidence type="ECO:0000255" key="1"/>
<evidence type="ECO:0000256" key="2">
    <source>
        <dbReference type="SAM" id="MobiDB-lite"/>
    </source>
</evidence>
<evidence type="ECO:0000305" key="3"/>